<evidence type="ECO:0000250" key="1">
    <source>
        <dbReference type="UniProtKB" id="P28776"/>
    </source>
</evidence>
<evidence type="ECO:0000256" key="2">
    <source>
        <dbReference type="SAM" id="MobiDB-lite"/>
    </source>
</evidence>
<evidence type="ECO:0000269" key="3">
    <source>
    </source>
</evidence>
<evidence type="ECO:0000269" key="4">
    <source>
    </source>
</evidence>
<evidence type="ECO:0000269" key="5">
    <source>
    </source>
</evidence>
<evidence type="ECO:0000269" key="6">
    <source>
    </source>
</evidence>
<evidence type="ECO:0000269" key="7">
    <source>
    </source>
</evidence>
<evidence type="ECO:0000269" key="8">
    <source>
    </source>
</evidence>
<evidence type="ECO:0000269" key="9">
    <source>
    </source>
</evidence>
<evidence type="ECO:0000269" key="10">
    <source>
    </source>
</evidence>
<evidence type="ECO:0000269" key="11">
    <source>
    </source>
</evidence>
<evidence type="ECO:0000269" key="12">
    <source>
    </source>
</evidence>
<evidence type="ECO:0000269" key="13">
    <source>
    </source>
</evidence>
<evidence type="ECO:0000269" key="14">
    <source>
    </source>
</evidence>
<evidence type="ECO:0000303" key="15">
    <source>
    </source>
</evidence>
<evidence type="ECO:0000303" key="16">
    <source>
    </source>
</evidence>
<evidence type="ECO:0000303" key="17">
    <source>
    </source>
</evidence>
<evidence type="ECO:0000303" key="18">
    <source>
    </source>
</evidence>
<evidence type="ECO:0000303" key="19">
    <source>
    </source>
</evidence>
<evidence type="ECO:0000303" key="20">
    <source>
    </source>
</evidence>
<evidence type="ECO:0000305" key="21"/>
<evidence type="ECO:0000312" key="22">
    <source>
        <dbReference type="HGNC" id="HGNC:6059"/>
    </source>
</evidence>
<evidence type="ECO:0007744" key="23">
    <source>
        <dbReference type="PDB" id="2D0T"/>
    </source>
</evidence>
<evidence type="ECO:0007744" key="24">
    <source>
        <dbReference type="PDB" id="2D0U"/>
    </source>
</evidence>
<evidence type="ECO:0007744" key="25">
    <source>
        <dbReference type="PDB" id="4PK5"/>
    </source>
</evidence>
<evidence type="ECO:0007744" key="26">
    <source>
        <dbReference type="PDB" id="4PK6"/>
    </source>
</evidence>
<evidence type="ECO:0007829" key="27">
    <source>
        <dbReference type="PDB" id="5WMV"/>
    </source>
</evidence>
<evidence type="ECO:0007829" key="28">
    <source>
        <dbReference type="PDB" id="5WMW"/>
    </source>
</evidence>
<evidence type="ECO:0007829" key="29">
    <source>
        <dbReference type="PDB" id="6E42"/>
    </source>
</evidence>
<evidence type="ECO:0007829" key="30">
    <source>
        <dbReference type="PDB" id="6E43"/>
    </source>
</evidence>
<evidence type="ECO:0007829" key="31">
    <source>
        <dbReference type="PDB" id="6E46"/>
    </source>
</evidence>
<evidence type="ECO:0007829" key="32">
    <source>
        <dbReference type="PDB" id="6F0A"/>
    </source>
</evidence>
<evidence type="ECO:0007829" key="33">
    <source>
        <dbReference type="PDB" id="6PZ1"/>
    </source>
</evidence>
<evidence type="ECO:0007829" key="34">
    <source>
        <dbReference type="PDB" id="6V52"/>
    </source>
</evidence>
<evidence type="ECO:0007829" key="35">
    <source>
        <dbReference type="PDB" id="7E0T"/>
    </source>
</evidence>
<evidence type="ECO:0007829" key="36">
    <source>
        <dbReference type="PDB" id="7NGE"/>
    </source>
</evidence>
<evidence type="ECO:0007829" key="37">
    <source>
        <dbReference type="PDB" id="7P0N"/>
    </source>
</evidence>
<evidence type="ECO:0007829" key="38">
    <source>
        <dbReference type="PDB" id="8ABX"/>
    </source>
</evidence>
<gene>
    <name evidence="22" type="primary">IDO1</name>
    <name type="synonym">IDO</name>
    <name type="synonym">INDO</name>
</gene>
<organism>
    <name type="scientific">Homo sapiens</name>
    <name type="common">Human</name>
    <dbReference type="NCBI Taxonomy" id="9606"/>
    <lineage>
        <taxon>Eukaryota</taxon>
        <taxon>Metazoa</taxon>
        <taxon>Chordata</taxon>
        <taxon>Craniata</taxon>
        <taxon>Vertebrata</taxon>
        <taxon>Euteleostomi</taxon>
        <taxon>Mammalia</taxon>
        <taxon>Eutheria</taxon>
        <taxon>Euarchontoglires</taxon>
        <taxon>Primates</taxon>
        <taxon>Haplorrhini</taxon>
        <taxon>Catarrhini</taxon>
        <taxon>Hominidae</taxon>
        <taxon>Homo</taxon>
    </lineage>
</organism>
<proteinExistence type="evidence at protein level"/>
<dbReference type="EC" id="1.13.11.52" evidence="6"/>
<dbReference type="EMBL" id="M34455">
    <property type="protein sequence ID" value="AAA36081.1"/>
    <property type="molecule type" value="mRNA"/>
</dbReference>
<dbReference type="EMBL" id="X17668">
    <property type="protein sequence ID" value="CAA35663.1"/>
    <property type="molecule type" value="mRNA"/>
</dbReference>
<dbReference type="EMBL" id="M86472">
    <property type="status" value="NOT_ANNOTATED_CDS"/>
    <property type="molecule type" value="Genomic_DNA"/>
</dbReference>
<dbReference type="EMBL" id="M86473">
    <property type="status" value="NOT_ANNOTATED_CDS"/>
    <property type="molecule type" value="Genomic_DNA"/>
</dbReference>
<dbReference type="EMBL" id="M86474">
    <property type="status" value="NOT_ANNOTATED_CDS"/>
    <property type="molecule type" value="Genomic_DNA"/>
</dbReference>
<dbReference type="EMBL" id="M86475">
    <property type="status" value="NOT_ANNOTATED_CDS"/>
    <property type="molecule type" value="Genomic_DNA"/>
</dbReference>
<dbReference type="EMBL" id="M86476">
    <property type="status" value="NOT_ANNOTATED_CDS"/>
    <property type="molecule type" value="Genomic_DNA"/>
</dbReference>
<dbReference type="EMBL" id="M86477">
    <property type="status" value="NOT_ANNOTATED_CDS"/>
    <property type="molecule type" value="Genomic_DNA"/>
</dbReference>
<dbReference type="EMBL" id="M86478">
    <property type="status" value="NOT_ANNOTATED_CDS"/>
    <property type="molecule type" value="Genomic_DNA"/>
</dbReference>
<dbReference type="EMBL" id="M86479">
    <property type="status" value="NOT_ANNOTATED_CDS"/>
    <property type="molecule type" value="Genomic_DNA"/>
</dbReference>
<dbReference type="EMBL" id="M86480">
    <property type="status" value="NOT_ANNOTATED_CDS"/>
    <property type="molecule type" value="Genomic_DNA"/>
</dbReference>
<dbReference type="EMBL" id="M86481">
    <property type="status" value="NOT_ANNOTATED_CDS"/>
    <property type="molecule type" value="Genomic_DNA"/>
</dbReference>
<dbReference type="EMBL" id="JF772862">
    <property type="protein sequence ID" value="AEF30540.1"/>
    <property type="molecule type" value="mRNA"/>
</dbReference>
<dbReference type="EMBL" id="AY221100">
    <property type="protein sequence ID" value="AAO34405.1"/>
    <property type="molecule type" value="mRNA"/>
</dbReference>
<dbReference type="EMBL" id="AK313259">
    <property type="protein sequence ID" value="BAG36069.1"/>
    <property type="molecule type" value="mRNA"/>
</dbReference>
<dbReference type="EMBL" id="AC007991">
    <property type="status" value="NOT_ANNOTATED_CDS"/>
    <property type="molecule type" value="Genomic_DNA"/>
</dbReference>
<dbReference type="EMBL" id="BC027882">
    <property type="protein sequence ID" value="AAH27882.1"/>
    <property type="molecule type" value="mRNA"/>
</dbReference>
<dbReference type="CCDS" id="CCDS47847.1"/>
<dbReference type="PIR" id="PC1161">
    <property type="entry name" value="PC1161"/>
</dbReference>
<dbReference type="RefSeq" id="NP_002155.1">
    <property type="nucleotide sequence ID" value="NM_002164.6"/>
</dbReference>
<dbReference type="PDB" id="2D0T">
    <property type="method" value="X-ray"/>
    <property type="resolution" value="2.30 A"/>
    <property type="chains" value="A/B=1-403"/>
</dbReference>
<dbReference type="PDB" id="2D0U">
    <property type="method" value="X-ray"/>
    <property type="resolution" value="3.40 A"/>
    <property type="chains" value="A/B=1-403"/>
</dbReference>
<dbReference type="PDB" id="4PK5">
    <property type="method" value="X-ray"/>
    <property type="resolution" value="2.79 A"/>
    <property type="chains" value="A/B=1-403"/>
</dbReference>
<dbReference type="PDB" id="4PK6">
    <property type="method" value="X-ray"/>
    <property type="resolution" value="3.45 A"/>
    <property type="chains" value="A/B=1-403"/>
</dbReference>
<dbReference type="PDB" id="4U72">
    <property type="method" value="X-ray"/>
    <property type="resolution" value="2.00 A"/>
    <property type="chains" value="A/B=1-403"/>
</dbReference>
<dbReference type="PDB" id="4U74">
    <property type="method" value="X-ray"/>
    <property type="resolution" value="2.31 A"/>
    <property type="chains" value="A/B=1-403"/>
</dbReference>
<dbReference type="PDB" id="5EK2">
    <property type="method" value="X-ray"/>
    <property type="resolution" value="2.68 A"/>
    <property type="chains" value="A/B=1-403"/>
</dbReference>
<dbReference type="PDB" id="5EK3">
    <property type="method" value="X-ray"/>
    <property type="resolution" value="2.21 A"/>
    <property type="chains" value="A/B=1-403"/>
</dbReference>
<dbReference type="PDB" id="5EK4">
    <property type="method" value="X-ray"/>
    <property type="resolution" value="2.64 A"/>
    <property type="chains" value="A/B=1-403"/>
</dbReference>
<dbReference type="PDB" id="5ETW">
    <property type="method" value="X-ray"/>
    <property type="resolution" value="2.70 A"/>
    <property type="chains" value="A/B=1-403"/>
</dbReference>
<dbReference type="PDB" id="5WHR">
    <property type="method" value="X-ray"/>
    <property type="resolution" value="2.28 A"/>
    <property type="chains" value="A/B=12-403"/>
</dbReference>
<dbReference type="PDB" id="5WMU">
    <property type="method" value="X-ray"/>
    <property type="resolution" value="2.40 A"/>
    <property type="chains" value="A/B=11-403"/>
</dbReference>
<dbReference type="PDB" id="5WMV">
    <property type="method" value="X-ray"/>
    <property type="resolution" value="2.60 A"/>
    <property type="chains" value="A/B=11-403"/>
</dbReference>
<dbReference type="PDB" id="5WMW">
    <property type="method" value="X-ray"/>
    <property type="resolution" value="3.03 A"/>
    <property type="chains" value="A/B=11-403"/>
</dbReference>
<dbReference type="PDB" id="5WMX">
    <property type="method" value="X-ray"/>
    <property type="resolution" value="2.69 A"/>
    <property type="chains" value="A/B=11-403"/>
</dbReference>
<dbReference type="PDB" id="5WN8">
    <property type="method" value="X-ray"/>
    <property type="resolution" value="2.50 A"/>
    <property type="chains" value="A/B=12-403"/>
</dbReference>
<dbReference type="PDB" id="5XE1">
    <property type="method" value="X-ray"/>
    <property type="resolution" value="3.20 A"/>
    <property type="chains" value="A/B=1-403"/>
</dbReference>
<dbReference type="PDB" id="6AZU">
    <property type="method" value="X-ray"/>
    <property type="resolution" value="2.82 A"/>
    <property type="chains" value="A/B/C/D=5-403"/>
</dbReference>
<dbReference type="PDB" id="6AZV">
    <property type="method" value="X-ray"/>
    <property type="resolution" value="2.75 A"/>
    <property type="chains" value="A/B/C/D=5-403"/>
</dbReference>
<dbReference type="PDB" id="6AZW">
    <property type="method" value="X-ray"/>
    <property type="resolution" value="2.78 A"/>
    <property type="chains" value="A/B=11-403"/>
</dbReference>
<dbReference type="PDB" id="6CXU">
    <property type="method" value="X-ray"/>
    <property type="resolution" value="2.49 A"/>
    <property type="chains" value="A/B=11-403"/>
</dbReference>
<dbReference type="PDB" id="6CXV">
    <property type="method" value="X-ray"/>
    <property type="resolution" value="2.60 A"/>
    <property type="chains" value="A/B=11-403"/>
</dbReference>
<dbReference type="PDB" id="6DPQ">
    <property type="method" value="X-ray"/>
    <property type="resolution" value="2.94 A"/>
    <property type="chains" value="A/B=11-403"/>
</dbReference>
<dbReference type="PDB" id="6DPR">
    <property type="method" value="X-ray"/>
    <property type="resolution" value="3.20 A"/>
    <property type="chains" value="A/B=13-403"/>
</dbReference>
<dbReference type="PDB" id="6E35">
    <property type="method" value="X-ray"/>
    <property type="resolution" value="2.41 A"/>
    <property type="chains" value="A/B=11-403"/>
</dbReference>
<dbReference type="PDB" id="6E40">
    <property type="method" value="X-ray"/>
    <property type="resolution" value="2.31 A"/>
    <property type="chains" value="A/B/C/D=15-403"/>
</dbReference>
<dbReference type="PDB" id="6E41">
    <property type="method" value="X-ray"/>
    <property type="resolution" value="2.29 A"/>
    <property type="chains" value="A/B/C/D=15-403"/>
</dbReference>
<dbReference type="PDB" id="6E42">
    <property type="method" value="X-ray"/>
    <property type="resolution" value="2.10 A"/>
    <property type="chains" value="A/B/C/D=15-403"/>
</dbReference>
<dbReference type="PDB" id="6E43">
    <property type="method" value="X-ray"/>
    <property type="resolution" value="1.71 A"/>
    <property type="chains" value="A/B/C/D=15-403"/>
</dbReference>
<dbReference type="PDB" id="6E44">
    <property type="method" value="X-ray"/>
    <property type="resolution" value="1.90 A"/>
    <property type="chains" value="A/B/C/D=15-403"/>
</dbReference>
<dbReference type="PDB" id="6E45">
    <property type="method" value="X-ray"/>
    <property type="resolution" value="2.00 A"/>
    <property type="chains" value="A/B/C/D=15-403"/>
</dbReference>
<dbReference type="PDB" id="6E46">
    <property type="method" value="X-ray"/>
    <property type="resolution" value="2.09 A"/>
    <property type="chains" value="A/B/C/D=15-403"/>
</dbReference>
<dbReference type="PDB" id="6F0A">
    <property type="method" value="X-ray"/>
    <property type="resolution" value="2.26 A"/>
    <property type="chains" value="A/C=11-403"/>
</dbReference>
<dbReference type="PDB" id="6KOF">
    <property type="method" value="X-ray"/>
    <property type="resolution" value="2.26 A"/>
    <property type="chains" value="A/B=1-403"/>
</dbReference>
<dbReference type="PDB" id="6KPS">
    <property type="method" value="X-ray"/>
    <property type="resolution" value="2.25 A"/>
    <property type="chains" value="A/B=1-403"/>
</dbReference>
<dbReference type="PDB" id="6KW7">
    <property type="method" value="X-ray"/>
    <property type="resolution" value="3.02 A"/>
    <property type="chains" value="A/B=1-403"/>
</dbReference>
<dbReference type="PDB" id="6MQ6">
    <property type="method" value="X-ray"/>
    <property type="resolution" value="3.05 A"/>
    <property type="chains" value="A/B=11-403"/>
</dbReference>
<dbReference type="PDB" id="6O3I">
    <property type="method" value="X-ray"/>
    <property type="resolution" value="2.69 A"/>
    <property type="chains" value="A/B=2-403"/>
</dbReference>
<dbReference type="PDB" id="6PU7">
    <property type="method" value="X-ray"/>
    <property type="resolution" value="2.43 A"/>
    <property type="chains" value="A/B=11-402"/>
</dbReference>
<dbReference type="PDB" id="6PZ1">
    <property type="method" value="X-ray"/>
    <property type="resolution" value="2.65 A"/>
    <property type="chains" value="A/B=11-403"/>
</dbReference>
<dbReference type="PDB" id="6R63">
    <property type="method" value="X-ray"/>
    <property type="resolution" value="2.89 A"/>
    <property type="chains" value="A/B=1-403"/>
</dbReference>
<dbReference type="PDB" id="6UBP">
    <property type="method" value="X-ray"/>
    <property type="resolution" value="2.95 A"/>
    <property type="chains" value="A/B=11-403"/>
</dbReference>
<dbReference type="PDB" id="6V52">
    <property type="method" value="X-ray"/>
    <property type="resolution" value="1.78 A"/>
    <property type="chains" value="A/B=11-403"/>
</dbReference>
<dbReference type="PDB" id="6WJY">
    <property type="method" value="X-ray"/>
    <property type="resolution" value="1.91 A"/>
    <property type="chains" value="A/B=11-403"/>
</dbReference>
<dbReference type="PDB" id="6WPE">
    <property type="method" value="X-ray"/>
    <property type="resolution" value="2.43 A"/>
    <property type="chains" value="A/B=11-403"/>
</dbReference>
<dbReference type="PDB" id="6X5Y">
    <property type="method" value="X-ray"/>
    <property type="resolution" value="2.65 A"/>
    <property type="chains" value="A/B=11-403"/>
</dbReference>
<dbReference type="PDB" id="7A62">
    <property type="method" value="X-ray"/>
    <property type="resolution" value="2.44 A"/>
    <property type="chains" value="A/B/C/D=15-403"/>
</dbReference>
<dbReference type="PDB" id="7AH4">
    <property type="method" value="X-ray"/>
    <property type="resolution" value="2.40 A"/>
    <property type="chains" value="A/B=1-403"/>
</dbReference>
<dbReference type="PDB" id="7AH5">
    <property type="method" value="X-ray"/>
    <property type="resolution" value="2.90 A"/>
    <property type="chains" value="A/B=1-403"/>
</dbReference>
<dbReference type="PDB" id="7AH6">
    <property type="method" value="X-ray"/>
    <property type="resolution" value="3.00 A"/>
    <property type="chains" value="A/B=1-403"/>
</dbReference>
<dbReference type="PDB" id="7B1O">
    <property type="method" value="X-ray"/>
    <property type="resolution" value="2.58 A"/>
    <property type="chains" value="A/B=11-403"/>
</dbReference>
<dbReference type="PDB" id="7E0O">
    <property type="method" value="X-ray"/>
    <property type="resolution" value="3.34 A"/>
    <property type="chains" value="A/B=12-403"/>
</dbReference>
<dbReference type="PDB" id="7E0P">
    <property type="method" value="X-ray"/>
    <property type="resolution" value="2.63 A"/>
    <property type="chains" value="A/B=12-403"/>
</dbReference>
<dbReference type="PDB" id="7E0Q">
    <property type="method" value="X-ray"/>
    <property type="resolution" value="2.46 A"/>
    <property type="chains" value="A/B=12-403"/>
</dbReference>
<dbReference type="PDB" id="7E0S">
    <property type="method" value="X-ray"/>
    <property type="resolution" value="2.71 A"/>
    <property type="chains" value="A/B=12-403"/>
</dbReference>
<dbReference type="PDB" id="7E0T">
    <property type="method" value="X-ray"/>
    <property type="resolution" value="2.14 A"/>
    <property type="chains" value="A/B=12-403"/>
</dbReference>
<dbReference type="PDB" id="7E0U">
    <property type="method" value="X-ray"/>
    <property type="resolution" value="2.28 A"/>
    <property type="chains" value="A/B=12-403"/>
</dbReference>
<dbReference type="PDB" id="7M63">
    <property type="method" value="X-ray"/>
    <property type="resolution" value="3.10 A"/>
    <property type="chains" value="A/B=11-403"/>
</dbReference>
<dbReference type="PDB" id="7M7D">
    <property type="method" value="X-ray"/>
    <property type="resolution" value="2.60 A"/>
    <property type="chains" value="A/B=11-403"/>
</dbReference>
<dbReference type="PDB" id="7NGE">
    <property type="method" value="X-ray"/>
    <property type="resolution" value="2.30 A"/>
    <property type="chains" value="A/B/C/D=15-403"/>
</dbReference>
<dbReference type="PDB" id="7P0N">
    <property type="method" value="X-ray"/>
    <property type="resolution" value="2.50 A"/>
    <property type="chains" value="A/B/C/D=15-403"/>
</dbReference>
<dbReference type="PDB" id="7P0R">
    <property type="method" value="X-ray"/>
    <property type="resolution" value="2.50 A"/>
    <property type="chains" value="A/B/C/D=15-403"/>
</dbReference>
<dbReference type="PDB" id="7RRB">
    <property type="method" value="X-ray"/>
    <property type="resolution" value="2.69 A"/>
    <property type="chains" value="A/B=11-403"/>
</dbReference>
<dbReference type="PDB" id="7RRC">
    <property type="method" value="X-ray"/>
    <property type="resolution" value="2.18 A"/>
    <property type="chains" value="A/B=11-403"/>
</dbReference>
<dbReference type="PDB" id="7RRD">
    <property type="method" value="X-ray"/>
    <property type="resolution" value="2.76 A"/>
    <property type="chains" value="A/B=11-403"/>
</dbReference>
<dbReference type="PDB" id="7YXT">
    <property type="method" value="X-ray"/>
    <property type="resolution" value="2.48 A"/>
    <property type="chains" value="A/B/C/D=15-403"/>
</dbReference>
<dbReference type="PDB" id="7Z2L">
    <property type="method" value="X-ray"/>
    <property type="resolution" value="2.56 A"/>
    <property type="chains" value="A/B/C/D=15-403"/>
</dbReference>
<dbReference type="PDB" id="7ZV3">
    <property type="method" value="X-ray"/>
    <property type="resolution" value="2.55 A"/>
    <property type="chains" value="A/B=1-403"/>
</dbReference>
<dbReference type="PDB" id="8ABX">
    <property type="method" value="X-ray"/>
    <property type="resolution" value="1.65 A"/>
    <property type="chains" value="A=5-400"/>
</dbReference>
<dbReference type="PDB" id="8FUR">
    <property type="method" value="X-ray"/>
    <property type="resolution" value="2.29 A"/>
    <property type="chains" value="A/B/C/D=1-403"/>
</dbReference>
<dbReference type="PDB" id="8I7L">
    <property type="method" value="X-ray"/>
    <property type="resolution" value="2.80 A"/>
    <property type="chains" value="A/B=1-403"/>
</dbReference>
<dbReference type="PDB" id="8U5I">
    <property type="method" value="X-ray"/>
    <property type="resolution" value="2.17 A"/>
    <property type="chains" value="A/B=11-403"/>
</dbReference>
<dbReference type="PDB" id="9ESB">
    <property type="method" value="X-ray"/>
    <property type="resolution" value="2.25 A"/>
    <property type="chains" value="A/B=9-403"/>
</dbReference>
<dbReference type="PDB" id="9ESC">
    <property type="method" value="X-ray"/>
    <property type="resolution" value="1.95 A"/>
    <property type="chains" value="A/B=9-403"/>
</dbReference>
<dbReference type="PDB" id="9ESE">
    <property type="method" value="X-ray"/>
    <property type="resolution" value="2.54 A"/>
    <property type="chains" value="A/B=9-403"/>
</dbReference>
<dbReference type="PDB" id="9ESG">
    <property type="method" value="X-ray"/>
    <property type="resolution" value="2.50 A"/>
    <property type="chains" value="A/B=9-403"/>
</dbReference>
<dbReference type="PDBsum" id="2D0T"/>
<dbReference type="PDBsum" id="2D0U"/>
<dbReference type="PDBsum" id="4PK5"/>
<dbReference type="PDBsum" id="4PK6"/>
<dbReference type="PDBsum" id="4U72"/>
<dbReference type="PDBsum" id="4U74"/>
<dbReference type="PDBsum" id="5EK2"/>
<dbReference type="PDBsum" id="5EK3"/>
<dbReference type="PDBsum" id="5EK4"/>
<dbReference type="PDBsum" id="5ETW"/>
<dbReference type="PDBsum" id="5WHR"/>
<dbReference type="PDBsum" id="5WMU"/>
<dbReference type="PDBsum" id="5WMV"/>
<dbReference type="PDBsum" id="5WMW"/>
<dbReference type="PDBsum" id="5WMX"/>
<dbReference type="PDBsum" id="5WN8"/>
<dbReference type="PDBsum" id="5XE1"/>
<dbReference type="PDBsum" id="6AZU"/>
<dbReference type="PDBsum" id="6AZV"/>
<dbReference type="PDBsum" id="6AZW"/>
<dbReference type="PDBsum" id="6CXU"/>
<dbReference type="PDBsum" id="6CXV"/>
<dbReference type="PDBsum" id="6DPQ"/>
<dbReference type="PDBsum" id="6DPR"/>
<dbReference type="PDBsum" id="6E35"/>
<dbReference type="PDBsum" id="6E40"/>
<dbReference type="PDBsum" id="6E41"/>
<dbReference type="PDBsum" id="6E42"/>
<dbReference type="PDBsum" id="6E43"/>
<dbReference type="PDBsum" id="6E44"/>
<dbReference type="PDBsum" id="6E45"/>
<dbReference type="PDBsum" id="6E46"/>
<dbReference type="PDBsum" id="6F0A"/>
<dbReference type="PDBsum" id="6KOF"/>
<dbReference type="PDBsum" id="6KPS"/>
<dbReference type="PDBsum" id="6KW7"/>
<dbReference type="PDBsum" id="6MQ6"/>
<dbReference type="PDBsum" id="6O3I"/>
<dbReference type="PDBsum" id="6PU7"/>
<dbReference type="PDBsum" id="6PZ1"/>
<dbReference type="PDBsum" id="6R63"/>
<dbReference type="PDBsum" id="6UBP"/>
<dbReference type="PDBsum" id="6V52"/>
<dbReference type="PDBsum" id="6WJY"/>
<dbReference type="PDBsum" id="6WPE"/>
<dbReference type="PDBsum" id="6X5Y"/>
<dbReference type="PDBsum" id="7A62"/>
<dbReference type="PDBsum" id="7AH4"/>
<dbReference type="PDBsum" id="7AH5"/>
<dbReference type="PDBsum" id="7AH6"/>
<dbReference type="PDBsum" id="7B1O"/>
<dbReference type="PDBsum" id="7E0O"/>
<dbReference type="PDBsum" id="7E0P"/>
<dbReference type="PDBsum" id="7E0Q"/>
<dbReference type="PDBsum" id="7E0S"/>
<dbReference type="PDBsum" id="7E0T"/>
<dbReference type="PDBsum" id="7E0U"/>
<dbReference type="PDBsum" id="7M63"/>
<dbReference type="PDBsum" id="7M7D"/>
<dbReference type="PDBsum" id="7NGE"/>
<dbReference type="PDBsum" id="7P0N"/>
<dbReference type="PDBsum" id="7P0R"/>
<dbReference type="PDBsum" id="7RRB"/>
<dbReference type="PDBsum" id="7RRC"/>
<dbReference type="PDBsum" id="7RRD"/>
<dbReference type="PDBsum" id="7YXT"/>
<dbReference type="PDBsum" id="7Z2L"/>
<dbReference type="PDBsum" id="7ZV3"/>
<dbReference type="PDBsum" id="8ABX"/>
<dbReference type="PDBsum" id="8FUR"/>
<dbReference type="PDBsum" id="8I7L"/>
<dbReference type="PDBsum" id="8U5I"/>
<dbReference type="PDBsum" id="9ESB"/>
<dbReference type="PDBsum" id="9ESC"/>
<dbReference type="PDBsum" id="9ESE"/>
<dbReference type="PDBsum" id="9ESG"/>
<dbReference type="SMR" id="P14902"/>
<dbReference type="BioGRID" id="109832">
    <property type="interactions" value="7"/>
</dbReference>
<dbReference type="FunCoup" id="P14902">
    <property type="interactions" value="406"/>
</dbReference>
<dbReference type="IntAct" id="P14902">
    <property type="interactions" value="8"/>
</dbReference>
<dbReference type="MINT" id="P14902"/>
<dbReference type="STRING" id="9606.ENSP00000430950"/>
<dbReference type="BindingDB" id="P14902"/>
<dbReference type="ChEMBL" id="CHEMBL4685"/>
<dbReference type="DrugBank" id="DB03254">
    <property type="generic name" value="4-Phenyl-1h-Imidazole"/>
</dbReference>
<dbReference type="DrugBank" id="DB09061">
    <property type="generic name" value="Cannabidiol"/>
</dbReference>
<dbReference type="DrugBank" id="DB11717">
    <property type="generic name" value="Epacadostat"/>
</dbReference>
<dbReference type="DrugBank" id="DB12827">
    <property type="generic name" value="Indoximod"/>
</dbReference>
<dbReference type="DrugBank" id="DB14009">
    <property type="generic name" value="Medical Cannabis"/>
</dbReference>
<dbReference type="DrugBank" id="DB01065">
    <property type="generic name" value="Melatonin"/>
</dbReference>
<dbReference type="DrugBank" id="DB14011">
    <property type="generic name" value="Nabiximols"/>
</dbReference>
<dbReference type="DrugBank" id="DB00435">
    <property type="generic name" value="Nitric Oxide"/>
</dbReference>
<dbReference type="DrugBank" id="DB00150">
    <property type="generic name" value="Tryptophan"/>
</dbReference>
<dbReference type="DrugCentral" id="P14902"/>
<dbReference type="GuidetoPHARMACOLOGY" id="2829"/>
<dbReference type="iPTMnet" id="P14902"/>
<dbReference type="PhosphoSitePlus" id="P14902"/>
<dbReference type="BioMuta" id="IDO1"/>
<dbReference type="DMDM" id="123948"/>
<dbReference type="jPOST" id="P14902"/>
<dbReference type="MassIVE" id="P14902"/>
<dbReference type="PaxDb" id="9606-ENSP00000430950"/>
<dbReference type="PeptideAtlas" id="P14902"/>
<dbReference type="ProteomicsDB" id="15758"/>
<dbReference type="ProteomicsDB" id="53093"/>
<dbReference type="Antibodypedia" id="5705">
    <property type="antibodies" value="1057 antibodies from 46 providers"/>
</dbReference>
<dbReference type="CPTC" id="P14902">
    <property type="antibodies" value="6 antibodies"/>
</dbReference>
<dbReference type="DNASU" id="3620"/>
<dbReference type="Ensembl" id="ENST00000518237.6">
    <property type="protein sequence ID" value="ENSP00000430950.1"/>
    <property type="gene ID" value="ENSG00000131203.13"/>
</dbReference>
<dbReference type="Ensembl" id="ENST00000522495.5">
    <property type="protein sequence ID" value="ENSP00000430505.1"/>
    <property type="gene ID" value="ENSG00000131203.13"/>
</dbReference>
<dbReference type="GeneID" id="3620"/>
<dbReference type="KEGG" id="hsa:3620"/>
<dbReference type="MANE-Select" id="ENST00000518237.6">
    <property type="protein sequence ID" value="ENSP00000430950.1"/>
    <property type="RefSeq nucleotide sequence ID" value="NM_002164.6"/>
    <property type="RefSeq protein sequence ID" value="NP_002155.1"/>
</dbReference>
<dbReference type="UCSC" id="uc003xnm.5">
    <property type="organism name" value="human"/>
</dbReference>
<dbReference type="UCSC" id="uc064mfy.1">
    <property type="organism name" value="human"/>
</dbReference>
<dbReference type="AGR" id="HGNC:6059"/>
<dbReference type="CTD" id="3620"/>
<dbReference type="DisGeNET" id="3620"/>
<dbReference type="GeneCards" id="IDO1"/>
<dbReference type="HGNC" id="HGNC:6059">
    <property type="gene designation" value="IDO1"/>
</dbReference>
<dbReference type="HPA" id="ENSG00000131203">
    <property type="expression patterns" value="Tissue enhanced (lymphoid tissue, placenta)"/>
</dbReference>
<dbReference type="MIM" id="147435">
    <property type="type" value="gene"/>
</dbReference>
<dbReference type="neXtProt" id="NX_P14902"/>
<dbReference type="OpenTargets" id="ENSG00000131203"/>
<dbReference type="PharmGKB" id="PA29869"/>
<dbReference type="VEuPathDB" id="HostDB:ENSG00000131203"/>
<dbReference type="eggNOG" id="ENOG502RZ6X">
    <property type="taxonomic scope" value="Eukaryota"/>
</dbReference>
<dbReference type="GeneTree" id="ENSGT00940000161410"/>
<dbReference type="HOGENOM" id="CLU_010089_1_0_1"/>
<dbReference type="InParanoid" id="P14902"/>
<dbReference type="OMA" id="WHQYSGG"/>
<dbReference type="OrthoDB" id="10262710at2759"/>
<dbReference type="PAN-GO" id="P14902">
    <property type="GO annotations" value="5 GO annotations based on evolutionary models"/>
</dbReference>
<dbReference type="PhylomeDB" id="P14902"/>
<dbReference type="TreeFam" id="TF330978"/>
<dbReference type="BioCyc" id="MetaCyc:HS05502-MONOMER"/>
<dbReference type="BRENDA" id="1.13.11.11">
    <property type="organism ID" value="2681"/>
</dbReference>
<dbReference type="BRENDA" id="1.13.11.52">
    <property type="organism ID" value="2681"/>
</dbReference>
<dbReference type="PathwayCommons" id="P14902"/>
<dbReference type="Reactome" id="R-HSA-71240">
    <property type="pathway name" value="Tryptophan catabolism"/>
</dbReference>
<dbReference type="SABIO-RK" id="P14902"/>
<dbReference type="SignaLink" id="P14902"/>
<dbReference type="UniPathway" id="UPA00333">
    <property type="reaction ID" value="UER00453"/>
</dbReference>
<dbReference type="BioGRID-ORCS" id="3620">
    <property type="hits" value="10 hits in 1159 CRISPR screens"/>
</dbReference>
<dbReference type="ChiTaRS" id="IDO1">
    <property type="organism name" value="human"/>
</dbReference>
<dbReference type="EvolutionaryTrace" id="P14902"/>
<dbReference type="GeneWiki" id="Indoleamine_2,3-dioxygenase"/>
<dbReference type="GenomeRNAi" id="3620"/>
<dbReference type="Pharos" id="P14902">
    <property type="development level" value="Tchem"/>
</dbReference>
<dbReference type="PRO" id="PR:P14902"/>
<dbReference type="Proteomes" id="UP000005640">
    <property type="component" value="Chromosome 8"/>
</dbReference>
<dbReference type="RNAct" id="P14902">
    <property type="molecule type" value="protein"/>
</dbReference>
<dbReference type="Bgee" id="ENSG00000131203">
    <property type="expression patterns" value="Expressed in palpebral conjunctiva and 122 other cell types or tissues"/>
</dbReference>
<dbReference type="ExpressionAtlas" id="P14902">
    <property type="expression patterns" value="baseline and differential"/>
</dbReference>
<dbReference type="GO" id="GO:0005737">
    <property type="term" value="C:cytoplasm"/>
    <property type="evidence" value="ECO:0000318"/>
    <property type="project" value="GO_Central"/>
</dbReference>
<dbReference type="GO" id="GO:0005829">
    <property type="term" value="C:cytosol"/>
    <property type="evidence" value="ECO:0000304"/>
    <property type="project" value="Reactome"/>
</dbReference>
<dbReference type="GO" id="GO:0030485">
    <property type="term" value="C:smooth muscle contractile fiber"/>
    <property type="evidence" value="ECO:0007669"/>
    <property type="project" value="Ensembl"/>
</dbReference>
<dbReference type="GO" id="GO:0032421">
    <property type="term" value="C:stereocilium bundle"/>
    <property type="evidence" value="ECO:0007669"/>
    <property type="project" value="Ensembl"/>
</dbReference>
<dbReference type="GO" id="GO:0009055">
    <property type="term" value="F:electron transfer activity"/>
    <property type="evidence" value="ECO:0000304"/>
    <property type="project" value="UniProtKB"/>
</dbReference>
<dbReference type="GO" id="GO:0020037">
    <property type="term" value="F:heme binding"/>
    <property type="evidence" value="ECO:0007669"/>
    <property type="project" value="InterPro"/>
</dbReference>
<dbReference type="GO" id="GO:0033754">
    <property type="term" value="F:indoleamine 2,3-dioxygenase activity"/>
    <property type="evidence" value="ECO:0000315"/>
    <property type="project" value="UniProtKB"/>
</dbReference>
<dbReference type="GO" id="GO:0046872">
    <property type="term" value="F:metal ion binding"/>
    <property type="evidence" value="ECO:0007669"/>
    <property type="project" value="UniProtKB-KW"/>
</dbReference>
<dbReference type="GO" id="GO:0004833">
    <property type="term" value="F:tryptophan 2,3-dioxygenase activity"/>
    <property type="evidence" value="ECO:0000318"/>
    <property type="project" value="GO_Central"/>
</dbReference>
<dbReference type="GO" id="GO:0034354">
    <property type="term" value="P:'de novo' NAD biosynthetic process from L-tryptophan"/>
    <property type="evidence" value="ECO:0000318"/>
    <property type="project" value="GO_Central"/>
</dbReference>
<dbReference type="GO" id="GO:0007565">
    <property type="term" value="P:female pregnancy"/>
    <property type="evidence" value="ECO:0000304"/>
    <property type="project" value="ProtInc"/>
</dbReference>
<dbReference type="GO" id="GO:0006954">
    <property type="term" value="P:inflammatory response"/>
    <property type="evidence" value="ECO:0007669"/>
    <property type="project" value="Ensembl"/>
</dbReference>
<dbReference type="GO" id="GO:0034276">
    <property type="term" value="P:kynurenic acid biosynthetic process"/>
    <property type="evidence" value="ECO:0007669"/>
    <property type="project" value="Ensembl"/>
</dbReference>
<dbReference type="GO" id="GO:0006569">
    <property type="term" value="P:L-tryptophan catabolic process"/>
    <property type="evidence" value="ECO:0000304"/>
    <property type="project" value="ProtInc"/>
</dbReference>
<dbReference type="GO" id="GO:0019441">
    <property type="term" value="P:L-tryptophan catabolic process to kynurenine"/>
    <property type="evidence" value="ECO:0000318"/>
    <property type="project" value="GO_Central"/>
</dbReference>
<dbReference type="GO" id="GO:0033555">
    <property type="term" value="P:multicellular organismal response to stress"/>
    <property type="evidence" value="ECO:0007669"/>
    <property type="project" value="Ensembl"/>
</dbReference>
<dbReference type="GO" id="GO:0032693">
    <property type="term" value="P:negative regulation of interleukin-10 production"/>
    <property type="evidence" value="ECO:0007669"/>
    <property type="project" value="Ensembl"/>
</dbReference>
<dbReference type="GO" id="GO:0070233">
    <property type="term" value="P:negative regulation of T cell apoptotic process"/>
    <property type="evidence" value="ECO:0007669"/>
    <property type="project" value="Ensembl"/>
</dbReference>
<dbReference type="GO" id="GO:0042130">
    <property type="term" value="P:negative regulation of T cell proliferation"/>
    <property type="evidence" value="ECO:0007669"/>
    <property type="project" value="Ensembl"/>
</dbReference>
<dbReference type="GO" id="GO:0002678">
    <property type="term" value="P:positive regulation of chronic inflammatory response"/>
    <property type="evidence" value="ECO:0007669"/>
    <property type="project" value="Ensembl"/>
</dbReference>
<dbReference type="GO" id="GO:0032735">
    <property type="term" value="P:positive regulation of interleukin-12 production"/>
    <property type="evidence" value="ECO:0007669"/>
    <property type="project" value="Ensembl"/>
</dbReference>
<dbReference type="GO" id="GO:0070234">
    <property type="term" value="P:positive regulation of T cell apoptotic process"/>
    <property type="evidence" value="ECO:0000315"/>
    <property type="project" value="UniProtKB"/>
</dbReference>
<dbReference type="GO" id="GO:0002666">
    <property type="term" value="P:positive regulation of T cell tolerance induction"/>
    <property type="evidence" value="ECO:0007669"/>
    <property type="project" value="Ensembl"/>
</dbReference>
<dbReference type="GO" id="GO:0002830">
    <property type="term" value="P:positive regulation of type 2 immune response"/>
    <property type="evidence" value="ECO:0007669"/>
    <property type="project" value="Ensembl"/>
</dbReference>
<dbReference type="GO" id="GO:0019805">
    <property type="term" value="P:quinolinate biosynthetic process"/>
    <property type="evidence" value="ECO:0007669"/>
    <property type="project" value="Ensembl"/>
</dbReference>
<dbReference type="GO" id="GO:0032496">
    <property type="term" value="P:response to lipopolysaccharide"/>
    <property type="evidence" value="ECO:0007669"/>
    <property type="project" value="Ensembl"/>
</dbReference>
<dbReference type="GO" id="GO:0036269">
    <property type="term" value="P:swimming behavior"/>
    <property type="evidence" value="ECO:0007669"/>
    <property type="project" value="Ensembl"/>
</dbReference>
<dbReference type="GO" id="GO:0042098">
    <property type="term" value="P:T cell proliferation"/>
    <property type="evidence" value="ECO:0007669"/>
    <property type="project" value="Ensembl"/>
</dbReference>
<dbReference type="FunFam" id="1.20.58.480:FF:000003">
    <property type="entry name" value="Indoleamine 2,3-dioxygenase 1"/>
    <property type="match status" value="1"/>
</dbReference>
<dbReference type="Gene3D" id="1.20.58.480">
    <property type="match status" value="1"/>
</dbReference>
<dbReference type="InterPro" id="IPR000898">
    <property type="entry name" value="Indolamine_dOase"/>
</dbReference>
<dbReference type="InterPro" id="IPR037217">
    <property type="entry name" value="Trp/Indoleamine_2_3_dOase-like"/>
</dbReference>
<dbReference type="PANTHER" id="PTHR28657">
    <property type="entry name" value="INDOLEAMINE 2,3-DIOXYGENASE"/>
    <property type="match status" value="1"/>
</dbReference>
<dbReference type="PANTHER" id="PTHR28657:SF2">
    <property type="entry name" value="INDOLEAMINE 2,3-DIOXYGENASE 1"/>
    <property type="match status" value="1"/>
</dbReference>
<dbReference type="Pfam" id="PF01231">
    <property type="entry name" value="IDO"/>
    <property type="match status" value="1"/>
</dbReference>
<dbReference type="SUPFAM" id="SSF140959">
    <property type="entry name" value="Indolic compounds 2,3-dioxygenase-like"/>
    <property type="match status" value="1"/>
</dbReference>
<dbReference type="PROSITE" id="PS00876">
    <property type="entry name" value="IDO_1"/>
    <property type="match status" value="1"/>
</dbReference>
<dbReference type="PROSITE" id="PS00877">
    <property type="entry name" value="IDO_2"/>
    <property type="match status" value="1"/>
</dbReference>
<comment type="function">
    <text evidence="3 6 17 18 19">Catalyzes the first and rate limiting step of the catabolism of the essential amino acid tryptophan along the kynurenine pathway (PubMed:17671174). Involved in the peripheral immune tolerance, contributing to maintain homeostasis by preventing autoimmunity or immunopathology that would result from uncontrolled and overreacting immune responses (PubMed:25691885). Tryptophan shortage inhibits T lymphocytes division and accumulation of tryptophan catabolites induces T-cell apoptosis and differentiation of regulatory T-cells (PubMed:25691885). Acts as a suppressor of anti-tumor immunity (PubMed:14502282, PubMed:23103127, PubMed:25157255, PubMed:25691885). Limits the growth of intracellular pathogens by depriving tryptophan (PubMed:25691885). Protects the fetus from maternal immune rejection (PubMed:25691885).</text>
</comment>
<comment type="catalytic activity">
    <reaction evidence="6">
        <text>D-tryptophan + O2 = N-formyl-D-kynurenine</text>
        <dbReference type="Rhea" id="RHEA:14189"/>
        <dbReference type="ChEBI" id="CHEBI:15379"/>
        <dbReference type="ChEBI" id="CHEBI:57719"/>
        <dbReference type="ChEBI" id="CHEBI:60051"/>
        <dbReference type="EC" id="1.13.11.52"/>
    </reaction>
</comment>
<comment type="catalytic activity">
    <reaction evidence="6">
        <text>L-tryptophan + O2 = N-formyl-L-kynurenine</text>
        <dbReference type="Rhea" id="RHEA:24536"/>
        <dbReference type="ChEBI" id="CHEBI:15379"/>
        <dbReference type="ChEBI" id="CHEBI:57912"/>
        <dbReference type="ChEBI" id="CHEBI:58629"/>
        <dbReference type="EC" id="1.13.11.52"/>
    </reaction>
</comment>
<comment type="cofactor">
    <cofactor evidence="4 10">
        <name>heme b</name>
        <dbReference type="ChEBI" id="CHEBI:60344"/>
    </cofactor>
    <text evidence="4 5 10">Binds 1 heme group per subunit (PubMed:16477023, PubMed:25313323). In the active form, the heme iron is in its ferrous state Fe(+2). The catalytic cycle does not alter the oxidation state of the heme, but IDO1 is prone to autoxidation (PubMed:16574111).</text>
</comment>
<comment type="activity regulation">
    <text evidence="6">Activity is inhibited by and MTH-trp (methylthiohydantoin-DL-tryptophan), modestly inhibited by L-1MT (1-methyl-L-tryptophan) but not D-1MT (1-methyl-D-tryptophan).</text>
</comment>
<comment type="biophysicochemical properties">
    <kinetics>
        <KM evidence="7">21.23 uM for L-tryptophan</KM>
        <KM evidence="7">4.6 mM for D-tryptophan</KM>
        <text>Catalytic efficiency for L-tryptophan is 150 times higher than for D-tryptophan.</text>
    </kinetics>
</comment>
<comment type="pathway">
    <text>Amino-acid degradation; L-tryptophan degradation via kynurenine pathway; L-kynurenine from L-tryptophan: step 1/2.</text>
</comment>
<comment type="subunit">
    <text evidence="19">Monomer.</text>
</comment>
<comment type="subcellular location">
    <subcellularLocation>
        <location evidence="1 19">Cytoplasm</location>
        <location evidence="1 19">Cytosol</location>
    </subcellularLocation>
</comment>
<comment type="tissue specificity">
    <text evidence="8 12 14">Expressed in mature dendritic cells located in lymphoid organs (including lymph nodes, spleen, tonsils, Peyers's patches, the gut lamina propria, and the thymic medulla), in some epithelial cells of the female genital tract, as well as in endothelial cells of term placenta and in lung parenchyma (PubMed:25691885). Weakly or not expressed in most normal tissues, but mostly inducible in most tissues (PubMed:25691885). Expressed in more than 50% of tumors, either by tumoral, stromal, or endothelial cells (expression in tumor is associated with a worse clinical outcome) (PubMed:18418598). Not overexpressed in tumor-draining lymph nodes (PubMed:25691885, PubMed:26155395).</text>
</comment>
<comment type="induction">
    <text evidence="9 15 18">By IFNG/IFN-gamma in most cells (PubMed:1907934, PubMed:2109605). Exogenous inflammatory stimuli induce the expression of IDO1 in antigen-presenting cells such as dendritic cells, macrophages and B-cells (PubMed:25157255).</text>
</comment>
<comment type="miscellaneous">
    <text evidence="20">IDO1 is the target for therapy in a range of clinical settings, including cancer, chronic infections, autoimmune and allergic syndromes, and transplantation.</text>
</comment>
<comment type="miscellaneous">
    <text evidence="8 11 13">IDO1 and IDO2 are 2 distinct enzymes which catalyze the same reaction. IDO2 affinity for tryptophan is much lower than that of IDO1. 50% of Caucasians harbor polymorphisms which abolish IDO2 enzymatic activity. IDO2 is expressed in human tumors in an inactive form: tryptophan degradation is entirely provided by IDO1 in these cells (PubMed:18418598). IDO2 may play a role as a negative regulator of IDO1 by competing for heme-binding with IDO1 (PubMed:25394548). Low efficiency IDO2 enzymes have been conserved throughout vertebrate evolution, whereas higher efficiency IDO1 enzymes are dispensable in many lower vertebrate lineages (PubMed:25950090). IDO1 may have arisen by gene duplication of a more ancient proto-IDO gene before the divergence of marsupial and eutherian (placental) mammals.</text>
</comment>
<comment type="miscellaneous">
    <text evidence="18">Elevated IDO1 expression is a hallmark of major viral infections including HIV, HBV, HCV or influenza and also of major bacteria infections, such as Tb, CAP, listeriosis and sepsis. Depletion of tryptophan and production of tryptophan metabolites with bactericidal activity are important as direct anti-pathogen mechanisms. Pathogens are able to highjack the immunosuppressive effects of IDO1 and make use of them to facilitate their own life cycle.</text>
</comment>
<comment type="similarity">
    <text evidence="21">Belongs to the indoleamine 2,3-dioxygenase family.</text>
</comment>
<comment type="sequence caution" evidence="21">
    <conflict type="erroneous gene model prediction">
        <sequence resource="EMBL" id="AC007991"/>
    </conflict>
</comment>
<comment type="online information" name="Atlas of Genetics and Cytogenetics in Oncology and Haematology">
    <link uri="https://atlasgeneticsoncology.org/gene/40973/IDO1"/>
</comment>
<protein>
    <recommendedName>
        <fullName evidence="16">Indoleamine 2,3-dioxygenase 1</fullName>
        <shortName>IDO-1</shortName>
        <ecNumber evidence="6">1.13.11.52</ecNumber>
    </recommendedName>
    <alternativeName>
        <fullName>Indoleamine-pyrrole 2,3-dioxygenase</fullName>
    </alternativeName>
</protein>
<name>I23O1_HUMAN</name>
<feature type="chain" id="PRO_0000215204" description="Indoleamine 2,3-dioxygenase 1">
    <location>
        <begin position="1"/>
        <end position="403"/>
    </location>
</feature>
<feature type="region of interest" description="Disordered" evidence="2">
    <location>
        <begin position="360"/>
        <end position="381"/>
    </location>
</feature>
<feature type="compositionally biased region" description="Basic and acidic residues" evidence="2">
    <location>
        <begin position="363"/>
        <end position="376"/>
    </location>
</feature>
<feature type="binding site" description="proximal binding residue" evidence="4 10 23 24 25 26">
    <location>
        <position position="346"/>
    </location>
    <ligand>
        <name>heme b</name>
        <dbReference type="ChEBI" id="CHEBI:60344"/>
    </ligand>
    <ligandPart>
        <name>Fe</name>
        <dbReference type="ChEBI" id="CHEBI:18248"/>
    </ligandPart>
</feature>
<feature type="sequence variant" id="VAR_053368" description="In dbSNP:rs35059413.">
    <original>A</original>
    <variation>T</variation>
    <location>
        <position position="4"/>
    </location>
</feature>
<feature type="sequence conflict" description="In Ref. 5; AEF30540." evidence="21" ref="5">
    <original>G</original>
    <variation>R</variation>
    <location>
        <position position="251"/>
    </location>
</feature>
<feature type="strand" evidence="38">
    <location>
        <begin position="5"/>
        <end position="11"/>
    </location>
</feature>
<feature type="helix" evidence="38">
    <location>
        <begin position="13"/>
        <end position="15"/>
    </location>
</feature>
<feature type="turn" evidence="38">
    <location>
        <begin position="19"/>
        <end position="21"/>
    </location>
</feature>
<feature type="helix" evidence="38">
    <location>
        <begin position="34"/>
        <end position="36"/>
    </location>
</feature>
<feature type="helix" evidence="38">
    <location>
        <begin position="37"/>
        <end position="44"/>
    </location>
</feature>
<feature type="helix" evidence="38">
    <location>
        <begin position="46"/>
        <end position="51"/>
    </location>
</feature>
<feature type="helix" evidence="38">
    <location>
        <begin position="55"/>
        <end position="60"/>
    </location>
</feature>
<feature type="helix" evidence="38">
    <location>
        <begin position="67"/>
        <end position="69"/>
    </location>
</feature>
<feature type="helix" evidence="38">
    <location>
        <begin position="73"/>
        <end position="92"/>
    </location>
</feature>
<feature type="strand" evidence="38">
    <location>
        <begin position="95"/>
        <end position="97"/>
    </location>
</feature>
<feature type="strand" evidence="38">
    <location>
        <begin position="101"/>
        <end position="103"/>
    </location>
</feature>
<feature type="helix" evidence="38">
    <location>
        <begin position="105"/>
        <end position="118"/>
    </location>
</feature>
<feature type="helix" evidence="38">
    <location>
        <begin position="126"/>
        <end position="129"/>
    </location>
</feature>
<feature type="turn" evidence="38">
    <location>
        <begin position="130"/>
        <end position="132"/>
    </location>
</feature>
<feature type="strand" evidence="38">
    <location>
        <begin position="135"/>
        <end position="138"/>
    </location>
</feature>
<feature type="strand" evidence="27">
    <location>
        <begin position="139"/>
        <end position="141"/>
    </location>
</feature>
<feature type="helix" evidence="38">
    <location>
        <begin position="145"/>
        <end position="147"/>
    </location>
</feature>
<feature type="strand" evidence="31">
    <location>
        <begin position="148"/>
        <end position="151"/>
    </location>
</feature>
<feature type="strand" evidence="33">
    <location>
        <begin position="154"/>
        <end position="158"/>
    </location>
</feature>
<feature type="helix" evidence="38">
    <location>
        <begin position="160"/>
        <end position="175"/>
    </location>
</feature>
<feature type="helix" evidence="38">
    <location>
        <begin position="176"/>
        <end position="180"/>
    </location>
</feature>
<feature type="helix" evidence="38">
    <location>
        <begin position="181"/>
        <end position="189"/>
    </location>
</feature>
<feature type="helix" evidence="38">
    <location>
        <begin position="193"/>
        <end position="214"/>
    </location>
</feature>
<feature type="helix" evidence="38">
    <location>
        <begin position="217"/>
        <end position="220"/>
    </location>
</feature>
<feature type="helix" evidence="38">
    <location>
        <begin position="223"/>
        <end position="228"/>
    </location>
</feature>
<feature type="helix" evidence="38">
    <location>
        <begin position="230"/>
        <end position="234"/>
    </location>
</feature>
<feature type="strand" evidence="38">
    <location>
        <begin position="237"/>
        <end position="239"/>
    </location>
</feature>
<feature type="helix" evidence="38">
    <location>
        <begin position="241"/>
        <end position="243"/>
    </location>
</feature>
<feature type="strand" evidence="38">
    <location>
        <begin position="247"/>
        <end position="249"/>
    </location>
</feature>
<feature type="turn" evidence="38">
    <location>
        <begin position="250"/>
        <end position="252"/>
    </location>
</feature>
<feature type="strand" evidence="35">
    <location>
        <begin position="254"/>
        <end position="257"/>
    </location>
</feature>
<feature type="helix" evidence="30">
    <location>
        <begin position="264"/>
        <end position="266"/>
    </location>
</feature>
<feature type="helix" evidence="38">
    <location>
        <begin position="268"/>
        <end position="276"/>
    </location>
</feature>
<feature type="strand" evidence="34">
    <location>
        <begin position="281"/>
        <end position="284"/>
    </location>
</feature>
<feature type="turn" evidence="37">
    <location>
        <begin position="286"/>
        <end position="288"/>
    </location>
</feature>
<feature type="helix" evidence="38">
    <location>
        <begin position="289"/>
        <end position="296"/>
    </location>
</feature>
<feature type="strand" evidence="28">
    <location>
        <begin position="297"/>
        <end position="299"/>
    </location>
</feature>
<feature type="helix" evidence="38">
    <location>
        <begin position="301"/>
        <end position="311"/>
    </location>
</feature>
<feature type="helix" evidence="38">
    <location>
        <begin position="316"/>
        <end position="323"/>
    </location>
</feature>
<feature type="helix" evidence="38">
    <location>
        <begin position="326"/>
        <end position="353"/>
    </location>
</feature>
<feature type="helix" evidence="38">
    <location>
        <begin position="355"/>
        <end position="359"/>
    </location>
</feature>
<feature type="strand" evidence="36">
    <location>
        <begin position="360"/>
        <end position="363"/>
    </location>
</feature>
<feature type="turn" evidence="36">
    <location>
        <begin position="367"/>
        <end position="369"/>
    </location>
</feature>
<feature type="helix" evidence="29">
    <location>
        <begin position="372"/>
        <end position="374"/>
    </location>
</feature>
<feature type="turn" evidence="30">
    <location>
        <begin position="377"/>
        <end position="379"/>
    </location>
</feature>
<feature type="strand" evidence="32">
    <location>
        <begin position="381"/>
        <end position="383"/>
    </location>
</feature>
<feature type="helix" evidence="38">
    <location>
        <begin position="384"/>
        <end position="396"/>
    </location>
</feature>
<keyword id="KW-0002">3D-structure</keyword>
<keyword id="KW-0963">Cytoplasm</keyword>
<keyword id="KW-0223">Dioxygenase</keyword>
<keyword id="KW-0903">Direct protein sequencing</keyword>
<keyword id="KW-0349">Heme</keyword>
<keyword id="KW-0391">Immunity</keyword>
<keyword id="KW-0408">Iron</keyword>
<keyword id="KW-0479">Metal-binding</keyword>
<keyword id="KW-0560">Oxidoreductase</keyword>
<keyword id="KW-1267">Proteomics identification</keyword>
<keyword id="KW-1185">Reference proteome</keyword>
<keyword id="KW-0823">Tryptophan catabolism</keyword>
<accession>P14902</accession>
<accession>E5RGR8</accession>
<accession>F6M9T7</accession>
<accession>Q540B4</accession>
<reference key="1">
    <citation type="journal article" date="1990" name="Biochem. Biophys. Res. Commun.">
        <title>Molecular cloning, sequencing and expression of human interferon-gamma-inducible indoleamine 2,3-dioxygenase cDNA.</title>
        <authorList>
            <person name="Dai W."/>
            <person name="Gupta S.L."/>
        </authorList>
    </citation>
    <scope>NUCLEOTIDE SEQUENCE [MRNA]</scope>
    <scope>INDUCTION BY IFNG</scope>
    <source>
        <tissue>Fibroblast</tissue>
    </source>
</reference>
<reference key="2">
    <citation type="journal article" date="1990" name="Nucleic Acids Res.">
        <title>Primary structure of human indoleamine 2,3-dioxygenase deduced from the nucleotide sequence of its cDNA.</title>
        <authorList>
            <person name="Tone S."/>
            <person name="Takikawa O."/>
            <person name="Habara-Ohkubo A."/>
            <person name="Kadoya A."/>
            <person name="Yoshida R."/>
            <person name="Kido R."/>
        </authorList>
    </citation>
    <scope>NUCLEOTIDE SEQUENCE [MRNA]</scope>
    <scope>PARTIAL PROTEIN SEQUENCE</scope>
    <source>
        <tissue>Lung</tissue>
    </source>
</reference>
<reference key="3">
    <citation type="journal article" date="1992" name="Biochem. Biophys. Res. Commun.">
        <title>Gene structure of human indoleamine 2,3-dioxygenase.</title>
        <authorList>
            <person name="Kadoya A."/>
            <person name="Tone S."/>
            <person name="Maeda H."/>
            <person name="Minatogawa Y."/>
            <person name="Kido R."/>
        </authorList>
    </citation>
    <scope>NUCLEOTIDE SEQUENCE [GENOMIC DNA]</scope>
</reference>
<reference key="4">
    <citation type="submission" date="2003-01" db="EMBL/GenBank/DDBJ databases">
        <title>Human indoleamine 2,3-dioxygenase from peripheral blood.</title>
        <authorList>
            <person name="He X."/>
            <person name="Xu L."/>
            <person name="Liu Y."/>
            <person name="Zeng Y."/>
        </authorList>
    </citation>
    <scope>NUCLEOTIDE SEQUENCE [MRNA]</scope>
    <source>
        <tissue>Peripheral blood</tissue>
    </source>
</reference>
<reference key="5">
    <citation type="submission" date="2011-04" db="EMBL/GenBank/DDBJ databases">
        <title>Cloning and expression of human indolamine 2,3 dioxygenase.</title>
        <authorList>
            <person name="Qureshi A.M."/>
            <person name="Asghar K."/>
            <person name="Ashiq T."/>
            <person name="Anwar A."/>
            <person name="Raza M.I."/>
            <person name="Noor F."/>
            <person name="Qadri I."/>
        </authorList>
    </citation>
    <scope>NUCLEOTIDE SEQUENCE [MRNA]</scope>
    <source>
        <tissue>Placenta</tissue>
    </source>
</reference>
<reference key="6">
    <citation type="journal article" date="2004" name="Nat. Genet.">
        <title>Complete sequencing and characterization of 21,243 full-length human cDNAs.</title>
        <authorList>
            <person name="Ota T."/>
            <person name="Suzuki Y."/>
            <person name="Nishikawa T."/>
            <person name="Otsuki T."/>
            <person name="Sugiyama T."/>
            <person name="Irie R."/>
            <person name="Wakamatsu A."/>
            <person name="Hayashi K."/>
            <person name="Sato H."/>
            <person name="Nagai K."/>
            <person name="Kimura K."/>
            <person name="Makita H."/>
            <person name="Sekine M."/>
            <person name="Obayashi M."/>
            <person name="Nishi T."/>
            <person name="Shibahara T."/>
            <person name="Tanaka T."/>
            <person name="Ishii S."/>
            <person name="Yamamoto J."/>
            <person name="Saito K."/>
            <person name="Kawai Y."/>
            <person name="Isono Y."/>
            <person name="Nakamura Y."/>
            <person name="Nagahari K."/>
            <person name="Murakami K."/>
            <person name="Yasuda T."/>
            <person name="Iwayanagi T."/>
            <person name="Wagatsuma M."/>
            <person name="Shiratori A."/>
            <person name="Sudo H."/>
            <person name="Hosoiri T."/>
            <person name="Kaku Y."/>
            <person name="Kodaira H."/>
            <person name="Kondo H."/>
            <person name="Sugawara M."/>
            <person name="Takahashi M."/>
            <person name="Kanda K."/>
            <person name="Yokoi T."/>
            <person name="Furuya T."/>
            <person name="Kikkawa E."/>
            <person name="Omura Y."/>
            <person name="Abe K."/>
            <person name="Kamihara K."/>
            <person name="Katsuta N."/>
            <person name="Sato K."/>
            <person name="Tanikawa M."/>
            <person name="Yamazaki M."/>
            <person name="Ninomiya K."/>
            <person name="Ishibashi T."/>
            <person name="Yamashita H."/>
            <person name="Murakawa K."/>
            <person name="Fujimori K."/>
            <person name="Tanai H."/>
            <person name="Kimata M."/>
            <person name="Watanabe M."/>
            <person name="Hiraoka S."/>
            <person name="Chiba Y."/>
            <person name="Ishida S."/>
            <person name="Ono Y."/>
            <person name="Takiguchi S."/>
            <person name="Watanabe S."/>
            <person name="Yosida M."/>
            <person name="Hotuta T."/>
            <person name="Kusano J."/>
            <person name="Kanehori K."/>
            <person name="Takahashi-Fujii A."/>
            <person name="Hara H."/>
            <person name="Tanase T.-O."/>
            <person name="Nomura Y."/>
            <person name="Togiya S."/>
            <person name="Komai F."/>
            <person name="Hara R."/>
            <person name="Takeuchi K."/>
            <person name="Arita M."/>
            <person name="Imose N."/>
            <person name="Musashino K."/>
            <person name="Yuuki H."/>
            <person name="Oshima A."/>
            <person name="Sasaki N."/>
            <person name="Aotsuka S."/>
            <person name="Yoshikawa Y."/>
            <person name="Matsunawa H."/>
            <person name="Ichihara T."/>
            <person name="Shiohata N."/>
            <person name="Sano S."/>
            <person name="Moriya S."/>
            <person name="Momiyama H."/>
            <person name="Satoh N."/>
            <person name="Takami S."/>
            <person name="Terashima Y."/>
            <person name="Suzuki O."/>
            <person name="Nakagawa S."/>
            <person name="Senoh A."/>
            <person name="Mizoguchi H."/>
            <person name="Goto Y."/>
            <person name="Shimizu F."/>
            <person name="Wakebe H."/>
            <person name="Hishigaki H."/>
            <person name="Watanabe T."/>
            <person name="Sugiyama A."/>
            <person name="Takemoto M."/>
            <person name="Kawakami B."/>
            <person name="Yamazaki M."/>
            <person name="Watanabe K."/>
            <person name="Kumagai A."/>
            <person name="Itakura S."/>
            <person name="Fukuzumi Y."/>
            <person name="Fujimori Y."/>
            <person name="Komiyama M."/>
            <person name="Tashiro H."/>
            <person name="Tanigami A."/>
            <person name="Fujiwara T."/>
            <person name="Ono T."/>
            <person name="Yamada K."/>
            <person name="Fujii Y."/>
            <person name="Ozaki K."/>
            <person name="Hirao M."/>
            <person name="Ohmori Y."/>
            <person name="Kawabata A."/>
            <person name="Hikiji T."/>
            <person name="Kobatake N."/>
            <person name="Inagaki H."/>
            <person name="Ikema Y."/>
            <person name="Okamoto S."/>
            <person name="Okitani R."/>
            <person name="Kawakami T."/>
            <person name="Noguchi S."/>
            <person name="Itoh T."/>
            <person name="Shigeta K."/>
            <person name="Senba T."/>
            <person name="Matsumura K."/>
            <person name="Nakajima Y."/>
            <person name="Mizuno T."/>
            <person name="Morinaga M."/>
            <person name="Sasaki M."/>
            <person name="Togashi T."/>
            <person name="Oyama M."/>
            <person name="Hata H."/>
            <person name="Watanabe M."/>
            <person name="Komatsu T."/>
            <person name="Mizushima-Sugano J."/>
            <person name="Satoh T."/>
            <person name="Shirai Y."/>
            <person name="Takahashi Y."/>
            <person name="Nakagawa K."/>
            <person name="Okumura K."/>
            <person name="Nagase T."/>
            <person name="Nomura N."/>
            <person name="Kikuchi H."/>
            <person name="Masuho Y."/>
            <person name="Yamashita R."/>
            <person name="Nakai K."/>
            <person name="Yada T."/>
            <person name="Nakamura Y."/>
            <person name="Ohara O."/>
            <person name="Isogai T."/>
            <person name="Sugano S."/>
        </authorList>
    </citation>
    <scope>NUCLEOTIDE SEQUENCE [LARGE SCALE MRNA]</scope>
    <source>
        <tissue>Placenta</tissue>
    </source>
</reference>
<reference key="7">
    <citation type="journal article" date="2006" name="Nature">
        <title>DNA sequence and analysis of human chromosome 8.</title>
        <authorList>
            <person name="Nusbaum C."/>
            <person name="Mikkelsen T.S."/>
            <person name="Zody M.C."/>
            <person name="Asakawa S."/>
            <person name="Taudien S."/>
            <person name="Garber M."/>
            <person name="Kodira C.D."/>
            <person name="Schueler M.G."/>
            <person name="Shimizu A."/>
            <person name="Whittaker C.A."/>
            <person name="Chang J.L."/>
            <person name="Cuomo C.A."/>
            <person name="Dewar K."/>
            <person name="FitzGerald M.G."/>
            <person name="Yang X."/>
            <person name="Allen N.R."/>
            <person name="Anderson S."/>
            <person name="Asakawa T."/>
            <person name="Blechschmidt K."/>
            <person name="Bloom T."/>
            <person name="Borowsky M.L."/>
            <person name="Butler J."/>
            <person name="Cook A."/>
            <person name="Corum B."/>
            <person name="DeArellano K."/>
            <person name="DeCaprio D."/>
            <person name="Dooley K.T."/>
            <person name="Dorris L. III"/>
            <person name="Engels R."/>
            <person name="Gloeckner G."/>
            <person name="Hafez N."/>
            <person name="Hagopian D.S."/>
            <person name="Hall J.L."/>
            <person name="Ishikawa S.K."/>
            <person name="Jaffe D.B."/>
            <person name="Kamat A."/>
            <person name="Kudoh J."/>
            <person name="Lehmann R."/>
            <person name="Lokitsang T."/>
            <person name="Macdonald P."/>
            <person name="Major J.E."/>
            <person name="Matthews C.D."/>
            <person name="Mauceli E."/>
            <person name="Menzel U."/>
            <person name="Mihalev A.H."/>
            <person name="Minoshima S."/>
            <person name="Murayama Y."/>
            <person name="Naylor J.W."/>
            <person name="Nicol R."/>
            <person name="Nguyen C."/>
            <person name="O'Leary S.B."/>
            <person name="O'Neill K."/>
            <person name="Parker S.C.J."/>
            <person name="Polley A."/>
            <person name="Raymond C.K."/>
            <person name="Reichwald K."/>
            <person name="Rodriguez J."/>
            <person name="Sasaki T."/>
            <person name="Schilhabel M."/>
            <person name="Siddiqui R."/>
            <person name="Smith C.L."/>
            <person name="Sneddon T.P."/>
            <person name="Talamas J.A."/>
            <person name="Tenzin P."/>
            <person name="Topham K."/>
            <person name="Venkataraman V."/>
            <person name="Wen G."/>
            <person name="Yamazaki S."/>
            <person name="Young S.K."/>
            <person name="Zeng Q."/>
            <person name="Zimmer A.R."/>
            <person name="Rosenthal A."/>
            <person name="Birren B.W."/>
            <person name="Platzer M."/>
            <person name="Shimizu N."/>
            <person name="Lander E.S."/>
        </authorList>
    </citation>
    <scope>NUCLEOTIDE SEQUENCE [LARGE SCALE GENOMIC DNA]</scope>
</reference>
<reference key="8">
    <citation type="journal article" date="2004" name="Genome Res.">
        <title>The status, quality, and expansion of the NIH full-length cDNA project: the Mammalian Gene Collection (MGC).</title>
        <authorList>
            <consortium name="The MGC Project Team"/>
        </authorList>
    </citation>
    <scope>NUCLEOTIDE SEQUENCE [LARGE SCALE MRNA]</scope>
    <source>
        <tissue>Lung</tissue>
    </source>
</reference>
<reference key="9">
    <citation type="journal article" date="1991" name="FASEB J.">
        <title>Relationship between interferon-gamma, indoleamine 2,3-dioxygenase, and tryptophan catabolism.</title>
        <authorList>
            <person name="Taylor M.W."/>
            <person name="Feng G.S."/>
        </authorList>
    </citation>
    <scope>REVIEW</scope>
    <scope>INDUCTION BY IFNG</scope>
</reference>
<reference key="10">
    <citation type="journal article" date="2003" name="Nat. Med.">
        <title>Evidence for a tumoral immune resistance mechanism based on tryptophan degradation by indoleamine 2,3-dioxygenase.</title>
        <authorList>
            <person name="Uyttenhove C."/>
            <person name="Pilotte L."/>
            <person name="Theate I."/>
            <person name="Stroobant V."/>
            <person name="Colau D."/>
            <person name="Parmentier N."/>
            <person name="Boon T."/>
            <person name="Van den Eynde B.J."/>
        </authorList>
    </citation>
    <scope>FUNCTION</scope>
</reference>
<reference key="11">
    <citation type="journal article" date="2006" name="FEBS Lett.">
        <title>Cytochrome b(5) is a major reductant in vivo of human indoleamine 2,3-dioxygenase expressed in yeast.</title>
        <authorList>
            <person name="Vottero E."/>
            <person name="Mitchell D.A."/>
            <person name="Page M.J."/>
            <person name="MacGillivray R.T."/>
            <person name="Sadowski I.J."/>
            <person name="Roberge M."/>
            <person name="Mauk A.G."/>
        </authorList>
    </citation>
    <scope>COFACTOR</scope>
</reference>
<reference key="12">
    <citation type="journal article" date="2007" name="Cancer Res.">
        <title>Novel tryptophan catabolic enzyme IDO2 is the preferred biochemical target of the antitumor indoleamine 2,3-dioxygenase inhibitory compound D-1-methyl-tryptophan.</title>
        <authorList>
            <person name="Metz R."/>
            <person name="Duhadaway J.B."/>
            <person name="Kamasani U."/>
            <person name="Laury-Kleintop L."/>
            <person name="Muller A.J."/>
            <person name="Prendergast G.C."/>
        </authorList>
    </citation>
    <scope>FUNCTION</scope>
    <scope>ACTIVITY REGULATION</scope>
    <scope>CATALYTIC ACTIVITY</scope>
</reference>
<reference key="13">
    <citation type="journal article" date="2007" name="J. Mol. Evol.">
        <title>Evolution of vertebrate indoleamine 2,3-dioxygenases.</title>
        <authorList>
            <person name="Yuasa H.J."/>
            <person name="Takubo M."/>
            <person name="Takahashi A."/>
            <person name="Hasegawa T."/>
            <person name="Noma H."/>
            <person name="Suzuki T."/>
        </authorList>
    </citation>
    <scope>BIOPHYSICOCHEMICAL PROPERTIES</scope>
</reference>
<reference key="14">
    <citation type="journal article" date="2009" name="Cancer Immunol. Immunother.">
        <title>IDO1 and IDO2 are expressed in human tumors: levo- but not dextro-1-methyl tryptophan inhibits tryptophan catabolism.</title>
        <authorList>
            <person name="Loeb S."/>
            <person name="Koenigsrainer A."/>
            <person name="Zieker D."/>
            <person name="Bruecher B.L."/>
            <person name="Rammensee H.G."/>
            <person name="Opelz G."/>
            <person name="Terness P."/>
        </authorList>
    </citation>
    <scope>DIFFERENCE BETWEEN IDO1 AND IDO2</scope>
</reference>
<reference key="15">
    <citation type="journal article" date="2014" name="Exp. Mol. Med.">
        <title>Heme-binding-mediated negative regulation of the tryptophan metabolic enzyme indoleamine 2,3-dioxygenase 1 (IDO1) by IDO2.</title>
        <authorList>
            <person name="Lee Y.K."/>
            <person name="Lee H.B."/>
            <person name="Shin D.M."/>
            <person name="Kang M.J."/>
            <person name="Yi E.C."/>
            <person name="Noh S."/>
            <person name="Lee J."/>
            <person name="Lee C."/>
            <person name="Min C.K."/>
            <person name="Choi E.Y."/>
        </authorList>
    </citation>
    <scope>DIFFERENCE BETWEEN IDO1 AND IDO2</scope>
</reference>
<reference key="16">
    <citation type="journal article" date="2015" name="FEBS J.">
        <title>Low efficiency IDO2 enzymes are conserved in lower vertebrates, whereas higher efficiency IDO1 enzymes are dispensable.</title>
        <authorList>
            <person name="Yuasa H.J."/>
            <person name="Mizuno K."/>
            <person name="Ball H.J."/>
        </authorList>
    </citation>
    <scope>DIFFERENCE BETWEEN IDO1 AND IDO2</scope>
</reference>
<reference key="17">
    <citation type="journal article" date="2015" name="OncoImmunology">
        <title>Expression profile of the human IDO1 protein, a cancer drug target involved in tumoral immune resistance.</title>
        <authorList>
            <person name="Vigneron N."/>
            <person name="van Baren N."/>
            <person name="Van den Eynde B.J."/>
        </authorList>
    </citation>
    <scope>TISSUE SPECIFICITY</scope>
</reference>
<reference key="18">
    <citation type="journal article" date="2013" name="Trends Immunol.">
        <title>Indoleamine 2,3 dioxygenase and metabolic control of immune responses.</title>
        <authorList>
            <person name="Munn D.H."/>
            <person name="Mellor A.L."/>
        </authorList>
    </citation>
    <scope>REVIEW</scope>
</reference>
<reference key="19">
    <citation type="journal article" date="2014" name="Front. Immunol.">
        <title>New insights into IDO biology in bacterial and viral infections.</title>
        <authorList>
            <person name="Schmidt S.V."/>
            <person name="Schultze J.L."/>
        </authorList>
    </citation>
    <scope>REVIEW</scope>
</reference>
<reference key="20">
    <citation type="journal article" date="2015" name="Front. Immunol.">
        <title>Tryptophan-degrading enzymes in tumoral immune resistance.</title>
        <authorList>
            <person name="van Baren N."/>
            <person name="Van den Eynde B.J."/>
        </authorList>
    </citation>
    <scope>REVIEW</scope>
    <scope>TISSUE SPECIFICITY</scope>
</reference>
<reference key="21">
    <citation type="journal article" date="2015" name="J. Med. Chem.">
        <title>Challenges in the discovery of indoleamine 2,3-dioxygenase 1 (IDO1) inhibitors.</title>
        <authorList>
            <person name="Roehrig U.F."/>
            <person name="Majjigapu S.R."/>
            <person name="Vogel P."/>
            <person name="Zoete V."/>
            <person name="Michielin O."/>
        </authorList>
    </citation>
    <scope>REVIEW</scope>
</reference>
<reference key="22">
    <citation type="journal article" date="2006" name="Proc. Natl. Acad. Sci. U.S.A.">
        <title>Crystal structure of human indoleamine 2,3-dioxygenase: catalytic mechanism of O2 incorporation by a heme-containing dioxygenase.</title>
        <authorList>
            <person name="Sugimoto H."/>
            <person name="Oda S."/>
            <person name="Otsuki T."/>
            <person name="Hino T."/>
            <person name="Yoshida T."/>
            <person name="Shiro Y."/>
        </authorList>
    </citation>
    <scope>X-RAY CRYSTALLOGRAPHY (2.30 ANGSTROMS) IN COMPLEX WITH HEME</scope>
    <scope>COFACTOR</scope>
</reference>
<reference key="23">
    <citation type="journal article" date="2014" name="ACS Med. Chem. Lett.">
        <title>Crystal structures and structure-activity relationships of imidazothiazole derivatives as IDO1 inhibitors.</title>
        <authorList>
            <person name="Tojo S."/>
            <person name="Kohno T."/>
            <person name="Tanaka T."/>
            <person name="Kamioka S."/>
            <person name="Ota Y."/>
            <person name="Ishii T."/>
            <person name="Kamimoto K."/>
            <person name="Asano S."/>
            <person name="Isobe Y."/>
        </authorList>
    </citation>
    <scope>X-RAY CRYSTALLOGRAPHY (2.79 ANGSTROMS) IN COMPLEX WITH HEME</scope>
    <scope>COFACTOR</scope>
</reference>
<sequence>MAHAMENSWTISKEYHIDEEVGFALPNPQENLPDFYNDWMFIAKHLPDLIESGQLRERVEKLNMLSIDHLTDHKSQRLARLVLGCITMAYVWGKGHGDVRKVLPRNIAVPYCQLSKKLELPPILVYADCVLANWKKKDPNKPLTYENMDVLFSFRDGDCSKGFFLVSLLVEIAAASAIKVIPTVFKAMQMQERDTLLKALLEIASCLEKALQVFHQIHDHVNPKAFFSVLRIYLSGWKGNPQLSDGLVYEGFWEDPKEFAGGSAGQSSVFQCFDVLLGIQQTAGGGHAAQFLQDMRRYMPPAHRNFLCSLESNPSVREFVLSKGDAGLREAYDACVKALVSLRSYHLQIVTKYILIPASQQPKENKTSEDPSKLEAKGTGGTDLMNFLKTVRSTTEKSLLKEG</sequence>